<gene>
    <name type="primary">DAPB</name>
    <name type="ORF">MCYG_07560</name>
</gene>
<dbReference type="EC" id="3.4.14.5"/>
<dbReference type="EMBL" id="DS995707">
    <property type="protein sequence ID" value="EEQ34741.1"/>
    <property type="molecule type" value="Genomic_DNA"/>
</dbReference>
<dbReference type="RefSeq" id="XP_002843777.1">
    <property type="nucleotide sequence ID" value="XM_002843731.1"/>
</dbReference>
<dbReference type="SMR" id="C5FYZ3"/>
<dbReference type="STRING" id="554155.C5FYZ3"/>
<dbReference type="ESTHER" id="artoc-dapb">
    <property type="family name" value="DPP4N_Peptidase_S9"/>
</dbReference>
<dbReference type="MEROPS" id="S09.006"/>
<dbReference type="GlyCosmos" id="C5FYZ3">
    <property type="glycosylation" value="7 sites, No reported glycans"/>
</dbReference>
<dbReference type="GeneID" id="9225176"/>
<dbReference type="VEuPathDB" id="FungiDB:MCYG_07560"/>
<dbReference type="eggNOG" id="KOG2100">
    <property type="taxonomic scope" value="Eukaryota"/>
</dbReference>
<dbReference type="HOGENOM" id="CLU_006105_0_1_1"/>
<dbReference type="OMA" id="MRTPQEN"/>
<dbReference type="OrthoDB" id="16520at2759"/>
<dbReference type="Proteomes" id="UP000002035">
    <property type="component" value="Unassembled WGS sequence"/>
</dbReference>
<dbReference type="GO" id="GO:0000329">
    <property type="term" value="C:fungal-type vacuole membrane"/>
    <property type="evidence" value="ECO:0007669"/>
    <property type="project" value="EnsemblFungi"/>
</dbReference>
<dbReference type="GO" id="GO:0005886">
    <property type="term" value="C:plasma membrane"/>
    <property type="evidence" value="ECO:0007669"/>
    <property type="project" value="TreeGrafter"/>
</dbReference>
<dbReference type="GO" id="GO:0004177">
    <property type="term" value="F:aminopeptidase activity"/>
    <property type="evidence" value="ECO:0007669"/>
    <property type="project" value="UniProtKB-KW"/>
</dbReference>
<dbReference type="GO" id="GO:0008239">
    <property type="term" value="F:dipeptidyl-peptidase activity"/>
    <property type="evidence" value="ECO:0007669"/>
    <property type="project" value="UniProtKB-EC"/>
</dbReference>
<dbReference type="GO" id="GO:0008236">
    <property type="term" value="F:serine-type peptidase activity"/>
    <property type="evidence" value="ECO:0007669"/>
    <property type="project" value="UniProtKB-KW"/>
</dbReference>
<dbReference type="GO" id="GO:0006508">
    <property type="term" value="P:proteolysis"/>
    <property type="evidence" value="ECO:0007669"/>
    <property type="project" value="UniProtKB-KW"/>
</dbReference>
<dbReference type="FunFam" id="3.40.50.1820:FF:000003">
    <property type="entry name" value="Dipeptidyl peptidase 4"/>
    <property type="match status" value="1"/>
</dbReference>
<dbReference type="Gene3D" id="3.40.50.1820">
    <property type="entry name" value="alpha/beta hydrolase"/>
    <property type="match status" value="1"/>
</dbReference>
<dbReference type="Gene3D" id="2.140.10.30">
    <property type="entry name" value="Dipeptidylpeptidase IV, N-terminal domain"/>
    <property type="match status" value="1"/>
</dbReference>
<dbReference type="InterPro" id="IPR029058">
    <property type="entry name" value="AB_hydrolase_fold"/>
</dbReference>
<dbReference type="InterPro" id="IPR001375">
    <property type="entry name" value="Peptidase_S9_cat"/>
</dbReference>
<dbReference type="InterPro" id="IPR002469">
    <property type="entry name" value="Peptidase_S9B_N"/>
</dbReference>
<dbReference type="InterPro" id="IPR050278">
    <property type="entry name" value="Serine_Prot_S9B/DPPIV"/>
</dbReference>
<dbReference type="PANTHER" id="PTHR11731:SF200">
    <property type="entry name" value="DIPEPTIDYL PEPTIDASE 10, ISOFORM B"/>
    <property type="match status" value="1"/>
</dbReference>
<dbReference type="PANTHER" id="PTHR11731">
    <property type="entry name" value="PROTEASE FAMILY S9B,C DIPEPTIDYL-PEPTIDASE IV-RELATED"/>
    <property type="match status" value="1"/>
</dbReference>
<dbReference type="Pfam" id="PF00930">
    <property type="entry name" value="DPPIV_N"/>
    <property type="match status" value="1"/>
</dbReference>
<dbReference type="Pfam" id="PF00326">
    <property type="entry name" value="Peptidase_S9"/>
    <property type="match status" value="1"/>
</dbReference>
<dbReference type="SUPFAM" id="SSF53474">
    <property type="entry name" value="alpha/beta-Hydrolases"/>
    <property type="match status" value="1"/>
</dbReference>
<dbReference type="SUPFAM" id="SSF82171">
    <property type="entry name" value="DPP6 N-terminal domain-like"/>
    <property type="match status" value="1"/>
</dbReference>
<accession>C5FYZ3</accession>
<proteinExistence type="inferred from homology"/>
<evidence type="ECO:0000250" key="1"/>
<evidence type="ECO:0000255" key="2"/>
<evidence type="ECO:0000256" key="3">
    <source>
        <dbReference type="SAM" id="MobiDB-lite"/>
    </source>
</evidence>
<evidence type="ECO:0000305" key="4"/>
<comment type="function">
    <text evidence="1">Type IV dipeptidyl-peptidase which removes N-terminal dipeptides sequentially from polypeptides having unsubstituted N-termini provided that the penultimate residue is proline.</text>
</comment>
<comment type="catalytic activity">
    <reaction>
        <text>Release of an N-terminal dipeptide, Xaa-Yaa-|-Zaa-, from a polypeptide, preferentially when Yaa is Pro, provided Zaa is neither Pro nor hydroxyproline.</text>
        <dbReference type="EC" id="3.4.14.5"/>
    </reaction>
</comment>
<comment type="subcellular location">
    <subcellularLocation>
        <location evidence="1">Vacuole membrane</location>
        <topology evidence="1">Single-pass type II membrane protein</topology>
    </subcellularLocation>
    <text evidence="1">Lysosome-like vacuoles.</text>
</comment>
<comment type="similarity">
    <text evidence="4">Belongs to the peptidase S9B family.</text>
</comment>
<name>DAPB_ARTOC</name>
<keyword id="KW-0031">Aminopeptidase</keyword>
<keyword id="KW-0325">Glycoprotein</keyword>
<keyword id="KW-0378">Hydrolase</keyword>
<keyword id="KW-0472">Membrane</keyword>
<keyword id="KW-0645">Protease</keyword>
<keyword id="KW-1185">Reference proteome</keyword>
<keyword id="KW-0720">Serine protease</keyword>
<keyword id="KW-0735">Signal-anchor</keyword>
<keyword id="KW-0812">Transmembrane</keyword>
<keyword id="KW-1133">Transmembrane helix</keyword>
<keyword id="KW-0926">Vacuole</keyword>
<sequence length="919" mass="103544">MGANSRVNDDEAMPLTGHGAGSRDSIDSSSTASISLTLVDGASHTATEPSKSTNGHKSHTEGSYVNEKYHDSEEESWREDGYVPSGGKPAQRRTRIVFWLLVALCVGGWAMAFIIMATSPNNRHSTSDSSSGGSESEIVKPNTPHDGKKIPLDDVLGGMWGPVEHTISWISGPKGEDGLLLQKSEGGIGPYLHIEDVRNIHGMRANNNSIVLMKESVFFVNDERISPEKVWPSPDLKTVLAMTREKKNWRHSFTGLYWLFDVETQTAQPLDPEAPNGRVQLASWSPTSDAVVFTRDNNIYIRNLTSKAVKPITTDGGANLFYGIPDWVYEEEVFEGNSATWWSLDGKYISFLRTNETMVPEFPIDFYLSRPPGYTPEPGEEAYPYVQQIKYPKAGAPNPTVNLQFYDVEREESFSVNVDNNLKDDDRIIAEVIPASGGKMLVRETNRESYIVKVTVIDAAKREGKMVRSDNVDEIDGGWVEPSHSTTYIPSDPSAGRPHDGYIDTIIHEGYNHLAYFTPVENPKPMMLTTGNWEVVDAPSGVDLKNNVVYFVATKESPIDRHVYSVKLDGSELQMLNDSEKSAYYDVSFSNGAGYMLLKYQGPNIPWQKLISSPSNEDFYDEIIEENKNLARLSNEFSLPSLHYSTITVDGFKLPVVERRPPNFNETKKYPVLFHLYGGPGSQTVNKKFTVNFQTYVASNLGYLVVTVDGRGTGFNGRKFRCIVRRNLGYYEAHDQIQTAKEWGKKPYVDKTRIAIWGWSYGGFMTLKTLEQDAGETFQYGMAVAPVTDWRFYDSVYTERYMHMPQHNTEGYENASISNATSLSQNTRFLIMHGSADDNVHFQNTLTLLDKLDIMGMHNYDVHVFPDSNHGIYFHHAYKMVHQRLSDWLVNAFNGEWVRLRNPKPSGLKRVIRRLLHFG</sequence>
<protein>
    <recommendedName>
        <fullName>Probable dipeptidyl-aminopeptidase B</fullName>
        <shortName>DPAP B</shortName>
        <ecNumber>3.4.14.5</ecNumber>
    </recommendedName>
</protein>
<reference key="1">
    <citation type="journal article" date="2012" name="MBio">
        <title>Comparative genome analysis of Trichophyton rubrum and related dermatophytes reveals candidate genes involved in infection.</title>
        <authorList>
            <person name="Martinez D.A."/>
            <person name="Oliver B.G."/>
            <person name="Graeser Y."/>
            <person name="Goldberg J.M."/>
            <person name="Li W."/>
            <person name="Martinez-Rossi N.M."/>
            <person name="Monod M."/>
            <person name="Shelest E."/>
            <person name="Barton R.C."/>
            <person name="Birch E."/>
            <person name="Brakhage A.A."/>
            <person name="Chen Z."/>
            <person name="Gurr S.J."/>
            <person name="Heiman D."/>
            <person name="Heitman J."/>
            <person name="Kosti I."/>
            <person name="Rossi A."/>
            <person name="Saif S."/>
            <person name="Samalova M."/>
            <person name="Saunders C.W."/>
            <person name="Shea T."/>
            <person name="Summerbell R.C."/>
            <person name="Xu J."/>
            <person name="Young S."/>
            <person name="Zeng Q."/>
            <person name="Birren B.W."/>
            <person name="Cuomo C.A."/>
            <person name="White T.C."/>
        </authorList>
    </citation>
    <scope>NUCLEOTIDE SEQUENCE [LARGE SCALE GENOMIC DNA]</scope>
    <source>
        <strain>ATCC MYA-4605 / CBS 113480</strain>
    </source>
</reference>
<feature type="chain" id="PRO_0000412131" description="Probable dipeptidyl-aminopeptidase B">
    <location>
        <begin position="1"/>
        <end position="919"/>
    </location>
</feature>
<feature type="topological domain" description="Cytoplasmic" evidence="2">
    <location>
        <begin position="1"/>
        <end position="95"/>
    </location>
</feature>
<feature type="transmembrane region" description="Helical; Signal-anchor for type II membrane protein" evidence="2">
    <location>
        <begin position="96"/>
        <end position="116"/>
    </location>
</feature>
<feature type="topological domain" description="Vacuolar" evidence="2">
    <location>
        <begin position="117"/>
        <end position="919"/>
    </location>
</feature>
<feature type="region of interest" description="Disordered" evidence="3">
    <location>
        <begin position="1"/>
        <end position="89"/>
    </location>
</feature>
<feature type="region of interest" description="Disordered" evidence="3">
    <location>
        <begin position="121"/>
        <end position="150"/>
    </location>
</feature>
<feature type="compositionally biased region" description="Low complexity" evidence="3">
    <location>
        <begin position="27"/>
        <end position="38"/>
    </location>
</feature>
<feature type="compositionally biased region" description="Polar residues" evidence="3">
    <location>
        <begin position="44"/>
        <end position="55"/>
    </location>
</feature>
<feature type="compositionally biased region" description="Low complexity" evidence="3">
    <location>
        <begin position="127"/>
        <end position="136"/>
    </location>
</feature>
<feature type="active site" description="Charge relay system" evidence="1">
    <location>
        <position position="760"/>
    </location>
</feature>
<feature type="active site" description="Charge relay system" evidence="1">
    <location>
        <position position="837"/>
    </location>
</feature>
<feature type="active site" description="Charge relay system" evidence="1">
    <location>
        <position position="870"/>
    </location>
</feature>
<feature type="glycosylation site" description="N-linked (GlcNAc...) asparagine" evidence="2">
    <location>
        <position position="207"/>
    </location>
</feature>
<feature type="glycosylation site" description="N-linked (GlcNAc...) asparagine" evidence="2">
    <location>
        <position position="303"/>
    </location>
</feature>
<feature type="glycosylation site" description="N-linked (GlcNAc...) asparagine" evidence="2">
    <location>
        <position position="355"/>
    </location>
</feature>
<feature type="glycosylation site" description="N-linked (GlcNAc...) asparagine" evidence="2">
    <location>
        <position position="577"/>
    </location>
</feature>
<feature type="glycosylation site" description="N-linked (GlcNAc...) asparagine" evidence="2">
    <location>
        <position position="665"/>
    </location>
</feature>
<feature type="glycosylation site" description="N-linked (GlcNAc...) asparagine" evidence="2">
    <location>
        <position position="814"/>
    </location>
</feature>
<feature type="glycosylation site" description="N-linked (GlcNAc...) asparagine" evidence="2">
    <location>
        <position position="819"/>
    </location>
</feature>
<organism>
    <name type="scientific">Arthroderma otae (strain ATCC MYA-4605 / CBS 113480)</name>
    <name type="common">Microsporum canis</name>
    <dbReference type="NCBI Taxonomy" id="554155"/>
    <lineage>
        <taxon>Eukaryota</taxon>
        <taxon>Fungi</taxon>
        <taxon>Dikarya</taxon>
        <taxon>Ascomycota</taxon>
        <taxon>Pezizomycotina</taxon>
        <taxon>Eurotiomycetes</taxon>
        <taxon>Eurotiomycetidae</taxon>
        <taxon>Onygenales</taxon>
        <taxon>Arthrodermataceae</taxon>
        <taxon>Microsporum</taxon>
    </lineage>
</organism>